<organism>
    <name type="scientific">Aethionema grandiflorum</name>
    <name type="common">Persian stone-cress</name>
    <dbReference type="NCBI Taxonomy" id="72657"/>
    <lineage>
        <taxon>Eukaryota</taxon>
        <taxon>Viridiplantae</taxon>
        <taxon>Streptophyta</taxon>
        <taxon>Embryophyta</taxon>
        <taxon>Tracheophyta</taxon>
        <taxon>Spermatophyta</taxon>
        <taxon>Magnoliopsida</taxon>
        <taxon>eudicotyledons</taxon>
        <taxon>Gunneridae</taxon>
        <taxon>Pentapetalae</taxon>
        <taxon>rosids</taxon>
        <taxon>malvids</taxon>
        <taxon>Brassicales</taxon>
        <taxon>Brassicaceae</taxon>
        <taxon>Aethionemeae</taxon>
        <taxon>Aethionema</taxon>
    </lineage>
</organism>
<accession>A4QJN2</accession>
<keyword id="KW-0150">Chloroplast</keyword>
<keyword id="KW-0934">Plastid</keyword>
<keyword id="KW-0687">Ribonucleoprotein</keyword>
<keyword id="KW-0689">Ribosomal protein</keyword>
<keyword id="KW-0694">RNA-binding</keyword>
<keyword id="KW-0699">rRNA-binding</keyword>
<comment type="subunit">
    <text evidence="1">Part of the 30S ribosomal subunit.</text>
</comment>
<comment type="subcellular location">
    <subcellularLocation>
        <location>Plastid</location>
        <location>Chloroplast</location>
    </subcellularLocation>
</comment>
<comment type="similarity">
    <text evidence="1">Belongs to the universal ribosomal protein uS11 family.</text>
</comment>
<evidence type="ECO:0000255" key="1">
    <source>
        <dbReference type="HAMAP-Rule" id="MF_01310"/>
    </source>
</evidence>
<evidence type="ECO:0000256" key="2">
    <source>
        <dbReference type="SAM" id="MobiDB-lite"/>
    </source>
</evidence>
<evidence type="ECO:0000305" key="3"/>
<geneLocation type="chloroplast"/>
<reference key="1">
    <citation type="submission" date="2007-03" db="EMBL/GenBank/DDBJ databases">
        <title>Sequencing analysis of Aethionema grandiflorum chloroplast DNA.</title>
        <authorList>
            <person name="Hosouchi T."/>
            <person name="Tsuruoka H."/>
            <person name="Kotani H."/>
        </authorList>
    </citation>
    <scope>NUCLEOTIDE SEQUENCE [LARGE SCALE GENOMIC DNA]</scope>
</reference>
<sequence length="138" mass="14977">MAKPILRIGSRKNTRSGSRKNVRRIPKGVIHVQASFNNTIVTVTDVRGRVISWSSAGTCGFKGTRRGTPFAAQTAAGNAIRAVVDQGIQRAEVRIKGPGLGRDAALRAIRRSGILLSFVRDVTPMPHNGCRPPKKRRV</sequence>
<proteinExistence type="inferred from homology"/>
<dbReference type="EMBL" id="AP009367">
    <property type="protein sequence ID" value="BAF49887.1"/>
    <property type="molecule type" value="Genomic_DNA"/>
</dbReference>
<dbReference type="RefSeq" id="YP_001123063.1">
    <property type="nucleotide sequence ID" value="NC_009266.1"/>
</dbReference>
<dbReference type="SMR" id="A4QJN2"/>
<dbReference type="GeneID" id="4962270"/>
<dbReference type="GO" id="GO:0009507">
    <property type="term" value="C:chloroplast"/>
    <property type="evidence" value="ECO:0007669"/>
    <property type="project" value="UniProtKB-SubCell"/>
</dbReference>
<dbReference type="GO" id="GO:1990904">
    <property type="term" value="C:ribonucleoprotein complex"/>
    <property type="evidence" value="ECO:0007669"/>
    <property type="project" value="UniProtKB-KW"/>
</dbReference>
<dbReference type="GO" id="GO:0005840">
    <property type="term" value="C:ribosome"/>
    <property type="evidence" value="ECO:0007669"/>
    <property type="project" value="UniProtKB-KW"/>
</dbReference>
<dbReference type="GO" id="GO:0019843">
    <property type="term" value="F:rRNA binding"/>
    <property type="evidence" value="ECO:0007669"/>
    <property type="project" value="UniProtKB-UniRule"/>
</dbReference>
<dbReference type="GO" id="GO:0003735">
    <property type="term" value="F:structural constituent of ribosome"/>
    <property type="evidence" value="ECO:0007669"/>
    <property type="project" value="InterPro"/>
</dbReference>
<dbReference type="GO" id="GO:0006412">
    <property type="term" value="P:translation"/>
    <property type="evidence" value="ECO:0007669"/>
    <property type="project" value="UniProtKB-UniRule"/>
</dbReference>
<dbReference type="FunFam" id="3.30.420.80:FF:000003">
    <property type="entry name" value="30S ribosomal protein S11, chloroplastic"/>
    <property type="match status" value="1"/>
</dbReference>
<dbReference type="Gene3D" id="3.30.420.80">
    <property type="entry name" value="Ribosomal protein S11"/>
    <property type="match status" value="1"/>
</dbReference>
<dbReference type="HAMAP" id="MF_01310">
    <property type="entry name" value="Ribosomal_uS11"/>
    <property type="match status" value="1"/>
</dbReference>
<dbReference type="InterPro" id="IPR001971">
    <property type="entry name" value="Ribosomal_uS11"/>
</dbReference>
<dbReference type="InterPro" id="IPR019981">
    <property type="entry name" value="Ribosomal_uS11_bac-type"/>
</dbReference>
<dbReference type="InterPro" id="IPR018102">
    <property type="entry name" value="Ribosomal_uS11_CS"/>
</dbReference>
<dbReference type="InterPro" id="IPR036967">
    <property type="entry name" value="Ribosomal_uS11_sf"/>
</dbReference>
<dbReference type="NCBIfam" id="NF003698">
    <property type="entry name" value="PRK05309.1"/>
    <property type="match status" value="1"/>
</dbReference>
<dbReference type="NCBIfam" id="TIGR03632">
    <property type="entry name" value="uS11_bact"/>
    <property type="match status" value="1"/>
</dbReference>
<dbReference type="PANTHER" id="PTHR11759">
    <property type="entry name" value="40S RIBOSOMAL PROTEIN S14/30S RIBOSOMAL PROTEIN S11"/>
    <property type="match status" value="1"/>
</dbReference>
<dbReference type="Pfam" id="PF00411">
    <property type="entry name" value="Ribosomal_S11"/>
    <property type="match status" value="1"/>
</dbReference>
<dbReference type="PIRSF" id="PIRSF002131">
    <property type="entry name" value="Ribosomal_S11"/>
    <property type="match status" value="1"/>
</dbReference>
<dbReference type="SUPFAM" id="SSF53137">
    <property type="entry name" value="Translational machinery components"/>
    <property type="match status" value="1"/>
</dbReference>
<dbReference type="PROSITE" id="PS00054">
    <property type="entry name" value="RIBOSOMAL_S11"/>
    <property type="match status" value="1"/>
</dbReference>
<gene>
    <name evidence="1" type="primary">rps11</name>
</gene>
<protein>
    <recommendedName>
        <fullName evidence="1">Small ribosomal subunit protein uS11c</fullName>
    </recommendedName>
    <alternativeName>
        <fullName evidence="3">30S ribosomal protein S11, chloroplastic</fullName>
    </alternativeName>
</protein>
<name>RR11_AETGR</name>
<feature type="chain" id="PRO_0000294909" description="Small ribosomal subunit protein uS11c">
    <location>
        <begin position="1"/>
        <end position="138"/>
    </location>
</feature>
<feature type="region of interest" description="Disordered" evidence="2">
    <location>
        <begin position="1"/>
        <end position="23"/>
    </location>
</feature>
<feature type="compositionally biased region" description="Basic residues" evidence="2">
    <location>
        <begin position="9"/>
        <end position="23"/>
    </location>
</feature>